<reference key="1">
    <citation type="journal article" date="2008" name="PLoS ONE">
        <title>Genetic basis of virulence attenuation revealed by comparative genomic analysis of Mycobacterium tuberculosis strain H37Ra versus H37Rv.</title>
        <authorList>
            <person name="Zheng H."/>
            <person name="Lu L."/>
            <person name="Wang B."/>
            <person name="Pu S."/>
            <person name="Zhang X."/>
            <person name="Zhu G."/>
            <person name="Shi W."/>
            <person name="Zhang L."/>
            <person name="Wang H."/>
            <person name="Wang S."/>
            <person name="Zhao G."/>
            <person name="Zhang Y."/>
        </authorList>
    </citation>
    <scope>NUCLEOTIDE SEQUENCE [LARGE SCALE GENOMIC DNA]</scope>
    <source>
        <strain>ATCC 25177 / H37Ra</strain>
    </source>
</reference>
<accession>A5U4P6</accession>
<evidence type="ECO:0000255" key="1">
    <source>
        <dbReference type="HAMAP-Rule" id="MF_00206"/>
    </source>
</evidence>
<evidence type="ECO:0000255" key="2">
    <source>
        <dbReference type="PROSITE-ProRule" id="PRU01266"/>
    </source>
</evidence>
<proteinExistence type="inferred from homology"/>
<comment type="function">
    <text evidence="1">Catalyzes the radical-mediated insertion of two sulfur atoms into the C-6 and C-8 positions of the octanoyl moiety bound to the lipoyl domains of lipoate-dependent enzymes, thereby converting the octanoylated domains into lipoylated derivatives.</text>
</comment>
<comment type="catalytic activity">
    <reaction evidence="1">
        <text>[[Fe-S] cluster scaffold protein carrying a second [4Fe-4S](2+) cluster] + N(6)-octanoyl-L-lysyl-[protein] + 2 oxidized [2Fe-2S]-[ferredoxin] + 2 S-adenosyl-L-methionine + 4 H(+) = [[Fe-S] cluster scaffold protein] + N(6)-[(R)-dihydrolipoyl]-L-lysyl-[protein] + 4 Fe(3+) + 2 hydrogen sulfide + 2 5'-deoxyadenosine + 2 L-methionine + 2 reduced [2Fe-2S]-[ferredoxin]</text>
        <dbReference type="Rhea" id="RHEA:16585"/>
        <dbReference type="Rhea" id="RHEA-COMP:9928"/>
        <dbReference type="Rhea" id="RHEA-COMP:10000"/>
        <dbReference type="Rhea" id="RHEA-COMP:10001"/>
        <dbReference type="Rhea" id="RHEA-COMP:10475"/>
        <dbReference type="Rhea" id="RHEA-COMP:14568"/>
        <dbReference type="Rhea" id="RHEA-COMP:14569"/>
        <dbReference type="ChEBI" id="CHEBI:15378"/>
        <dbReference type="ChEBI" id="CHEBI:17319"/>
        <dbReference type="ChEBI" id="CHEBI:29034"/>
        <dbReference type="ChEBI" id="CHEBI:29919"/>
        <dbReference type="ChEBI" id="CHEBI:33722"/>
        <dbReference type="ChEBI" id="CHEBI:33737"/>
        <dbReference type="ChEBI" id="CHEBI:33738"/>
        <dbReference type="ChEBI" id="CHEBI:57844"/>
        <dbReference type="ChEBI" id="CHEBI:59789"/>
        <dbReference type="ChEBI" id="CHEBI:78809"/>
        <dbReference type="ChEBI" id="CHEBI:83100"/>
        <dbReference type="EC" id="2.8.1.8"/>
    </reaction>
</comment>
<comment type="cofactor">
    <cofactor evidence="1">
        <name>[4Fe-4S] cluster</name>
        <dbReference type="ChEBI" id="CHEBI:49883"/>
    </cofactor>
    <text evidence="1">Binds 2 [4Fe-4S] clusters per subunit. One cluster is coordinated with 3 cysteines and an exchangeable S-adenosyl-L-methionine.</text>
</comment>
<comment type="pathway">
    <text evidence="1">Protein modification; protein lipoylation via endogenous pathway; protein N(6)-(lipoyl)lysine from octanoyl-[acyl-carrier-protein]: step 2/2.</text>
</comment>
<comment type="subcellular location">
    <subcellularLocation>
        <location evidence="1">Cytoplasm</location>
    </subcellularLocation>
</comment>
<comment type="similarity">
    <text evidence="1">Belongs to the radical SAM superfamily. Lipoyl synthase family.</text>
</comment>
<gene>
    <name evidence="1" type="primary">lipA</name>
    <name type="ordered locus">MRA_2234</name>
</gene>
<name>LIPA_MYCTA</name>
<dbReference type="EC" id="2.8.1.8" evidence="1"/>
<dbReference type="EMBL" id="CP000611">
    <property type="protein sequence ID" value="ABQ73996.1"/>
    <property type="molecule type" value="Genomic_DNA"/>
</dbReference>
<dbReference type="RefSeq" id="WP_003411460.1">
    <property type="nucleotide sequence ID" value="NZ_CP016972.1"/>
</dbReference>
<dbReference type="SMR" id="A5U4P6"/>
<dbReference type="GeneID" id="45426194"/>
<dbReference type="KEGG" id="mra:MRA_2234"/>
<dbReference type="eggNOG" id="COG0320">
    <property type="taxonomic scope" value="Bacteria"/>
</dbReference>
<dbReference type="HOGENOM" id="CLU_033144_2_1_11"/>
<dbReference type="UniPathway" id="UPA00538">
    <property type="reaction ID" value="UER00593"/>
</dbReference>
<dbReference type="Proteomes" id="UP000001988">
    <property type="component" value="Chromosome"/>
</dbReference>
<dbReference type="GO" id="GO:0005737">
    <property type="term" value="C:cytoplasm"/>
    <property type="evidence" value="ECO:0007669"/>
    <property type="project" value="UniProtKB-SubCell"/>
</dbReference>
<dbReference type="GO" id="GO:0051539">
    <property type="term" value="F:4 iron, 4 sulfur cluster binding"/>
    <property type="evidence" value="ECO:0007669"/>
    <property type="project" value="UniProtKB-UniRule"/>
</dbReference>
<dbReference type="GO" id="GO:0016992">
    <property type="term" value="F:lipoate synthase activity"/>
    <property type="evidence" value="ECO:0007669"/>
    <property type="project" value="UniProtKB-UniRule"/>
</dbReference>
<dbReference type="GO" id="GO:0046872">
    <property type="term" value="F:metal ion binding"/>
    <property type="evidence" value="ECO:0007669"/>
    <property type="project" value="UniProtKB-KW"/>
</dbReference>
<dbReference type="CDD" id="cd01335">
    <property type="entry name" value="Radical_SAM"/>
    <property type="match status" value="1"/>
</dbReference>
<dbReference type="FunFam" id="3.20.20.70:FF:000116">
    <property type="entry name" value="Lipoyl synthase"/>
    <property type="match status" value="1"/>
</dbReference>
<dbReference type="Gene3D" id="3.20.20.70">
    <property type="entry name" value="Aldolase class I"/>
    <property type="match status" value="1"/>
</dbReference>
<dbReference type="HAMAP" id="MF_00206">
    <property type="entry name" value="Lipoyl_synth"/>
    <property type="match status" value="1"/>
</dbReference>
<dbReference type="InterPro" id="IPR013785">
    <property type="entry name" value="Aldolase_TIM"/>
</dbReference>
<dbReference type="InterPro" id="IPR006638">
    <property type="entry name" value="Elp3/MiaA/NifB-like_rSAM"/>
</dbReference>
<dbReference type="InterPro" id="IPR031691">
    <property type="entry name" value="LIAS_N"/>
</dbReference>
<dbReference type="InterPro" id="IPR003698">
    <property type="entry name" value="Lipoyl_synth"/>
</dbReference>
<dbReference type="InterPro" id="IPR007197">
    <property type="entry name" value="rSAM"/>
</dbReference>
<dbReference type="NCBIfam" id="TIGR00510">
    <property type="entry name" value="lipA"/>
    <property type="match status" value="1"/>
</dbReference>
<dbReference type="NCBIfam" id="NF004019">
    <property type="entry name" value="PRK05481.1"/>
    <property type="match status" value="1"/>
</dbReference>
<dbReference type="NCBIfam" id="NF009544">
    <property type="entry name" value="PRK12928.1"/>
    <property type="match status" value="1"/>
</dbReference>
<dbReference type="PANTHER" id="PTHR10949">
    <property type="entry name" value="LIPOYL SYNTHASE"/>
    <property type="match status" value="1"/>
</dbReference>
<dbReference type="PANTHER" id="PTHR10949:SF0">
    <property type="entry name" value="LIPOYL SYNTHASE, MITOCHONDRIAL"/>
    <property type="match status" value="1"/>
</dbReference>
<dbReference type="Pfam" id="PF16881">
    <property type="entry name" value="LIAS_N"/>
    <property type="match status" value="1"/>
</dbReference>
<dbReference type="Pfam" id="PF04055">
    <property type="entry name" value="Radical_SAM"/>
    <property type="match status" value="1"/>
</dbReference>
<dbReference type="PIRSF" id="PIRSF005963">
    <property type="entry name" value="Lipoyl_synth"/>
    <property type="match status" value="1"/>
</dbReference>
<dbReference type="SFLD" id="SFLDF00271">
    <property type="entry name" value="lipoyl_synthase"/>
    <property type="match status" value="1"/>
</dbReference>
<dbReference type="SFLD" id="SFLDS00029">
    <property type="entry name" value="Radical_SAM"/>
    <property type="match status" value="1"/>
</dbReference>
<dbReference type="SMART" id="SM00729">
    <property type="entry name" value="Elp3"/>
    <property type="match status" value="1"/>
</dbReference>
<dbReference type="SUPFAM" id="SSF102114">
    <property type="entry name" value="Radical SAM enzymes"/>
    <property type="match status" value="1"/>
</dbReference>
<dbReference type="PROSITE" id="PS51918">
    <property type="entry name" value="RADICAL_SAM"/>
    <property type="match status" value="1"/>
</dbReference>
<feature type="chain" id="PRO_1000012239" description="Lipoyl synthase">
    <location>
        <begin position="1"/>
        <end position="311"/>
    </location>
</feature>
<feature type="domain" description="Radical SAM core" evidence="2">
    <location>
        <begin position="67"/>
        <end position="281"/>
    </location>
</feature>
<feature type="binding site" evidence="1">
    <location>
        <position position="55"/>
    </location>
    <ligand>
        <name>[4Fe-4S] cluster</name>
        <dbReference type="ChEBI" id="CHEBI:49883"/>
        <label>1</label>
    </ligand>
</feature>
<feature type="binding site" evidence="1">
    <location>
        <position position="60"/>
    </location>
    <ligand>
        <name>[4Fe-4S] cluster</name>
        <dbReference type="ChEBI" id="CHEBI:49883"/>
        <label>1</label>
    </ligand>
</feature>
<feature type="binding site" evidence="1">
    <location>
        <position position="66"/>
    </location>
    <ligand>
        <name>[4Fe-4S] cluster</name>
        <dbReference type="ChEBI" id="CHEBI:49883"/>
        <label>1</label>
    </ligand>
</feature>
<feature type="binding site" evidence="1">
    <location>
        <position position="81"/>
    </location>
    <ligand>
        <name>[4Fe-4S] cluster</name>
        <dbReference type="ChEBI" id="CHEBI:49883"/>
        <label>2</label>
        <note>4Fe-4S-S-AdoMet</note>
    </ligand>
</feature>
<feature type="binding site" evidence="1">
    <location>
        <position position="85"/>
    </location>
    <ligand>
        <name>[4Fe-4S] cluster</name>
        <dbReference type="ChEBI" id="CHEBI:49883"/>
        <label>2</label>
        <note>4Fe-4S-S-AdoMet</note>
    </ligand>
</feature>
<feature type="binding site" evidence="1">
    <location>
        <position position="88"/>
    </location>
    <ligand>
        <name>[4Fe-4S] cluster</name>
        <dbReference type="ChEBI" id="CHEBI:49883"/>
        <label>2</label>
        <note>4Fe-4S-S-AdoMet</note>
    </ligand>
</feature>
<feature type="binding site" evidence="1">
    <location>
        <position position="292"/>
    </location>
    <ligand>
        <name>[4Fe-4S] cluster</name>
        <dbReference type="ChEBI" id="CHEBI:49883"/>
        <label>1</label>
    </ligand>
</feature>
<protein>
    <recommendedName>
        <fullName evidence="1">Lipoyl synthase</fullName>
        <ecNumber evidence="1">2.8.1.8</ecNumber>
    </recommendedName>
    <alternativeName>
        <fullName evidence="1">Lip-syn</fullName>
        <shortName evidence="1">LS</shortName>
    </alternativeName>
    <alternativeName>
        <fullName evidence="1">Lipoate synthase</fullName>
    </alternativeName>
    <alternativeName>
        <fullName evidence="1">Lipoic acid synthase</fullName>
    </alternativeName>
    <alternativeName>
        <fullName evidence="1">Sulfur insertion protein LipA</fullName>
    </alternativeName>
</protein>
<keyword id="KW-0004">4Fe-4S</keyword>
<keyword id="KW-0963">Cytoplasm</keyword>
<keyword id="KW-0408">Iron</keyword>
<keyword id="KW-0411">Iron-sulfur</keyword>
<keyword id="KW-0479">Metal-binding</keyword>
<keyword id="KW-1185">Reference proteome</keyword>
<keyword id="KW-0949">S-adenosyl-L-methionine</keyword>
<keyword id="KW-0808">Transferase</keyword>
<organism>
    <name type="scientific">Mycobacterium tuberculosis (strain ATCC 25177 / H37Ra)</name>
    <dbReference type="NCBI Taxonomy" id="419947"/>
    <lineage>
        <taxon>Bacteria</taxon>
        <taxon>Bacillati</taxon>
        <taxon>Actinomycetota</taxon>
        <taxon>Actinomycetes</taxon>
        <taxon>Mycobacteriales</taxon>
        <taxon>Mycobacteriaceae</taxon>
        <taxon>Mycobacterium</taxon>
        <taxon>Mycobacterium tuberculosis complex</taxon>
    </lineage>
</organism>
<sequence length="311" mass="34719">MSVAAEGRRLLRLEVRNAQTPIERKPPWIKTRARIGPEYTELKNLVRREGLHTVCEEAGCPNIFECWEDREATFLIGGDQCTRRCDFCQIDTGKPAELDRDEPRRVADSVRTMGLRYATVTGVARDDLPDGGAWLYAATVRAIKELNPSTGVELLIPDFNGEPTRLAEVFESGPEVLAHNVETVPRIFKRIRPAFTYRRSLGVLTAARDAGLVTKSNLILGLGETSDEVRTALGDLRDAGCDIVTITQYLRPSARHHPVERWVKPEEFVQFARFAEGLGFAGVLAGPLVRSSYRAGRLYEQARNSRALASR</sequence>